<reference key="1">
    <citation type="journal article" date="2008" name="J. Bacteriol.">
        <title>Genome sequence of the streptomycin-producing microorganism Streptomyces griseus IFO 13350.</title>
        <authorList>
            <person name="Ohnishi Y."/>
            <person name="Ishikawa J."/>
            <person name="Hara H."/>
            <person name="Suzuki H."/>
            <person name="Ikenoya M."/>
            <person name="Ikeda H."/>
            <person name="Yamashita A."/>
            <person name="Hattori M."/>
            <person name="Horinouchi S."/>
        </authorList>
    </citation>
    <scope>NUCLEOTIDE SEQUENCE [LARGE SCALE GENOMIC DNA]</scope>
    <source>
        <strain>JCM 4626 / CBS 651.72 / NBRC 13350 / KCC S-0626 / ISP 5235</strain>
    </source>
</reference>
<dbReference type="EC" id="6.2.1.5" evidence="1"/>
<dbReference type="EMBL" id="AP009493">
    <property type="protein sequence ID" value="BAG19552.1"/>
    <property type="molecule type" value="Genomic_DNA"/>
</dbReference>
<dbReference type="RefSeq" id="WP_003966852.1">
    <property type="nucleotide sequence ID" value="NC_010572.1"/>
</dbReference>
<dbReference type="SMR" id="B1W3P6"/>
<dbReference type="KEGG" id="sgr:SGR_2723"/>
<dbReference type="eggNOG" id="COG0045">
    <property type="taxonomic scope" value="Bacteria"/>
</dbReference>
<dbReference type="HOGENOM" id="CLU_037430_0_2_11"/>
<dbReference type="UniPathway" id="UPA00223">
    <property type="reaction ID" value="UER00999"/>
</dbReference>
<dbReference type="Proteomes" id="UP000001685">
    <property type="component" value="Chromosome"/>
</dbReference>
<dbReference type="GO" id="GO:0005829">
    <property type="term" value="C:cytosol"/>
    <property type="evidence" value="ECO:0007669"/>
    <property type="project" value="TreeGrafter"/>
</dbReference>
<dbReference type="GO" id="GO:0042709">
    <property type="term" value="C:succinate-CoA ligase complex"/>
    <property type="evidence" value="ECO:0007669"/>
    <property type="project" value="TreeGrafter"/>
</dbReference>
<dbReference type="GO" id="GO:0005524">
    <property type="term" value="F:ATP binding"/>
    <property type="evidence" value="ECO:0007669"/>
    <property type="project" value="UniProtKB-UniRule"/>
</dbReference>
<dbReference type="GO" id="GO:0000287">
    <property type="term" value="F:magnesium ion binding"/>
    <property type="evidence" value="ECO:0007669"/>
    <property type="project" value="UniProtKB-UniRule"/>
</dbReference>
<dbReference type="GO" id="GO:0004775">
    <property type="term" value="F:succinate-CoA ligase (ADP-forming) activity"/>
    <property type="evidence" value="ECO:0007669"/>
    <property type="project" value="UniProtKB-UniRule"/>
</dbReference>
<dbReference type="GO" id="GO:0004776">
    <property type="term" value="F:succinate-CoA ligase (GDP-forming) activity"/>
    <property type="evidence" value="ECO:0007669"/>
    <property type="project" value="RHEA"/>
</dbReference>
<dbReference type="GO" id="GO:0006104">
    <property type="term" value="P:succinyl-CoA metabolic process"/>
    <property type="evidence" value="ECO:0007669"/>
    <property type="project" value="TreeGrafter"/>
</dbReference>
<dbReference type="GO" id="GO:0006099">
    <property type="term" value="P:tricarboxylic acid cycle"/>
    <property type="evidence" value="ECO:0007669"/>
    <property type="project" value="UniProtKB-UniRule"/>
</dbReference>
<dbReference type="FunFam" id="3.30.1490.20:FF:000014">
    <property type="entry name" value="Succinate--CoA ligase [ADP-forming] subunit beta"/>
    <property type="match status" value="1"/>
</dbReference>
<dbReference type="FunFam" id="3.30.470.20:FF:000002">
    <property type="entry name" value="Succinate--CoA ligase [ADP-forming] subunit beta"/>
    <property type="match status" value="1"/>
</dbReference>
<dbReference type="FunFam" id="3.40.50.261:FF:000007">
    <property type="entry name" value="Succinate--CoA ligase [ADP-forming] subunit beta"/>
    <property type="match status" value="1"/>
</dbReference>
<dbReference type="Gene3D" id="3.30.1490.20">
    <property type="entry name" value="ATP-grasp fold, A domain"/>
    <property type="match status" value="1"/>
</dbReference>
<dbReference type="Gene3D" id="3.30.470.20">
    <property type="entry name" value="ATP-grasp fold, B domain"/>
    <property type="match status" value="1"/>
</dbReference>
<dbReference type="Gene3D" id="3.40.50.261">
    <property type="entry name" value="Succinyl-CoA synthetase domains"/>
    <property type="match status" value="1"/>
</dbReference>
<dbReference type="HAMAP" id="MF_00558">
    <property type="entry name" value="Succ_CoA_beta"/>
    <property type="match status" value="1"/>
</dbReference>
<dbReference type="InterPro" id="IPR011761">
    <property type="entry name" value="ATP-grasp"/>
</dbReference>
<dbReference type="InterPro" id="IPR013650">
    <property type="entry name" value="ATP-grasp_succ-CoA_synth-type"/>
</dbReference>
<dbReference type="InterPro" id="IPR013815">
    <property type="entry name" value="ATP_grasp_subdomain_1"/>
</dbReference>
<dbReference type="InterPro" id="IPR017866">
    <property type="entry name" value="Succ-CoA_synthase_bsu_CS"/>
</dbReference>
<dbReference type="InterPro" id="IPR005811">
    <property type="entry name" value="SUCC_ACL_C"/>
</dbReference>
<dbReference type="InterPro" id="IPR005809">
    <property type="entry name" value="Succ_CoA_ligase-like_bsu"/>
</dbReference>
<dbReference type="InterPro" id="IPR016102">
    <property type="entry name" value="Succinyl-CoA_synth-like"/>
</dbReference>
<dbReference type="NCBIfam" id="NF001913">
    <property type="entry name" value="PRK00696.1"/>
    <property type="match status" value="1"/>
</dbReference>
<dbReference type="NCBIfam" id="TIGR01016">
    <property type="entry name" value="sucCoAbeta"/>
    <property type="match status" value="1"/>
</dbReference>
<dbReference type="PANTHER" id="PTHR11815:SF10">
    <property type="entry name" value="SUCCINATE--COA LIGASE [GDP-FORMING] SUBUNIT BETA, MITOCHONDRIAL"/>
    <property type="match status" value="1"/>
</dbReference>
<dbReference type="PANTHER" id="PTHR11815">
    <property type="entry name" value="SUCCINYL-COA SYNTHETASE BETA CHAIN"/>
    <property type="match status" value="1"/>
</dbReference>
<dbReference type="Pfam" id="PF08442">
    <property type="entry name" value="ATP-grasp_2"/>
    <property type="match status" value="1"/>
</dbReference>
<dbReference type="Pfam" id="PF00549">
    <property type="entry name" value="Ligase_CoA"/>
    <property type="match status" value="1"/>
</dbReference>
<dbReference type="PIRSF" id="PIRSF001554">
    <property type="entry name" value="SucCS_beta"/>
    <property type="match status" value="1"/>
</dbReference>
<dbReference type="SUPFAM" id="SSF56059">
    <property type="entry name" value="Glutathione synthetase ATP-binding domain-like"/>
    <property type="match status" value="1"/>
</dbReference>
<dbReference type="SUPFAM" id="SSF52210">
    <property type="entry name" value="Succinyl-CoA synthetase domains"/>
    <property type="match status" value="1"/>
</dbReference>
<dbReference type="PROSITE" id="PS50975">
    <property type="entry name" value="ATP_GRASP"/>
    <property type="match status" value="1"/>
</dbReference>
<dbReference type="PROSITE" id="PS01217">
    <property type="entry name" value="SUCCINYL_COA_LIG_3"/>
    <property type="match status" value="1"/>
</dbReference>
<protein>
    <recommendedName>
        <fullName evidence="1">Succinate--CoA ligase [ADP-forming] subunit beta</fullName>
        <ecNumber evidence="1">6.2.1.5</ecNumber>
    </recommendedName>
    <alternativeName>
        <fullName evidence="1">Succinyl-CoA synthetase subunit beta</fullName>
        <shortName evidence="1">SCS-beta</shortName>
    </alternativeName>
</protein>
<sequence>MDLFEYQARDLFAKHGVPVLAGEVIDTPEAAREATEKLGGKSVVKAQVKVGGRGKAGGVKLAADPDEAVARATDILGMDIKGHTVHKVMIAELSPEIEAEYYVSYLLDRTNRTFLAMASVQGGMDIEEVAEKTPEALAKVPVNAVDGVDIAKAREIVAQAKFPADVAEGVAEALVTLWDTFVAEDALLVEVNPLVKTKDGRILALDGKVSLDENADFRQPDHEALEDKDAANPLEAAAKAKNLNYVKLDGEVGIIGNGAGLVMSTLDVVAYAGENHGNVKPANFLDIGGGASAEVMANGLEIILGDPDVRSVFVNVFGGITACDEVANGIVQALALLESKGEKVEKPLVVRLDGNNAELGRKILSDANHPLVQRVDTMDGAADKAAELAAAAK</sequence>
<gene>
    <name evidence="1" type="primary">sucC</name>
    <name type="ordered locus">SGR_2723</name>
</gene>
<evidence type="ECO:0000255" key="1">
    <source>
        <dbReference type="HAMAP-Rule" id="MF_00558"/>
    </source>
</evidence>
<keyword id="KW-0067">ATP-binding</keyword>
<keyword id="KW-0436">Ligase</keyword>
<keyword id="KW-0460">Magnesium</keyword>
<keyword id="KW-0479">Metal-binding</keyword>
<keyword id="KW-0547">Nucleotide-binding</keyword>
<keyword id="KW-0816">Tricarboxylic acid cycle</keyword>
<organism>
    <name type="scientific">Streptomyces griseus subsp. griseus (strain JCM 4626 / CBS 651.72 / NBRC 13350 / KCC S-0626 / ISP 5235)</name>
    <dbReference type="NCBI Taxonomy" id="455632"/>
    <lineage>
        <taxon>Bacteria</taxon>
        <taxon>Bacillati</taxon>
        <taxon>Actinomycetota</taxon>
        <taxon>Actinomycetes</taxon>
        <taxon>Kitasatosporales</taxon>
        <taxon>Streptomycetaceae</taxon>
        <taxon>Streptomyces</taxon>
    </lineage>
</organism>
<accession>B1W3P6</accession>
<name>SUCC_STRGG</name>
<proteinExistence type="inferred from homology"/>
<comment type="function">
    <text evidence="1">Succinyl-CoA synthetase functions in the citric acid cycle (TCA), coupling the hydrolysis of succinyl-CoA to the synthesis of either ATP or GTP and thus represents the only step of substrate-level phosphorylation in the TCA. The beta subunit provides nucleotide specificity of the enzyme and binds the substrate succinate, while the binding sites for coenzyme A and phosphate are found in the alpha subunit.</text>
</comment>
<comment type="catalytic activity">
    <reaction evidence="1">
        <text>succinate + ATP + CoA = succinyl-CoA + ADP + phosphate</text>
        <dbReference type="Rhea" id="RHEA:17661"/>
        <dbReference type="ChEBI" id="CHEBI:30031"/>
        <dbReference type="ChEBI" id="CHEBI:30616"/>
        <dbReference type="ChEBI" id="CHEBI:43474"/>
        <dbReference type="ChEBI" id="CHEBI:57287"/>
        <dbReference type="ChEBI" id="CHEBI:57292"/>
        <dbReference type="ChEBI" id="CHEBI:456216"/>
        <dbReference type="EC" id="6.2.1.5"/>
    </reaction>
    <physiologicalReaction direction="right-to-left" evidence="1">
        <dbReference type="Rhea" id="RHEA:17663"/>
    </physiologicalReaction>
</comment>
<comment type="catalytic activity">
    <reaction evidence="1">
        <text>GTP + succinate + CoA = succinyl-CoA + GDP + phosphate</text>
        <dbReference type="Rhea" id="RHEA:22120"/>
        <dbReference type="ChEBI" id="CHEBI:30031"/>
        <dbReference type="ChEBI" id="CHEBI:37565"/>
        <dbReference type="ChEBI" id="CHEBI:43474"/>
        <dbReference type="ChEBI" id="CHEBI:57287"/>
        <dbReference type="ChEBI" id="CHEBI:57292"/>
        <dbReference type="ChEBI" id="CHEBI:58189"/>
    </reaction>
    <physiologicalReaction direction="right-to-left" evidence="1">
        <dbReference type="Rhea" id="RHEA:22122"/>
    </physiologicalReaction>
</comment>
<comment type="cofactor">
    <cofactor evidence="1">
        <name>Mg(2+)</name>
        <dbReference type="ChEBI" id="CHEBI:18420"/>
    </cofactor>
    <text evidence="1">Binds 1 Mg(2+) ion per subunit.</text>
</comment>
<comment type="pathway">
    <text evidence="1">Carbohydrate metabolism; tricarboxylic acid cycle; succinate from succinyl-CoA (ligase route): step 1/1.</text>
</comment>
<comment type="subunit">
    <text evidence="1">Heterotetramer of two alpha and two beta subunits.</text>
</comment>
<comment type="similarity">
    <text evidence="1">Belongs to the succinate/malate CoA ligase beta subunit family.</text>
</comment>
<feature type="chain" id="PRO_1000129231" description="Succinate--CoA ligase [ADP-forming] subunit beta">
    <location>
        <begin position="1"/>
        <end position="393"/>
    </location>
</feature>
<feature type="domain" description="ATP-grasp" evidence="1">
    <location>
        <begin position="9"/>
        <end position="237"/>
    </location>
</feature>
<feature type="binding site" evidence="1">
    <location>
        <position position="45"/>
    </location>
    <ligand>
        <name>ATP</name>
        <dbReference type="ChEBI" id="CHEBI:30616"/>
    </ligand>
</feature>
<feature type="binding site" evidence="1">
    <location>
        <begin position="52"/>
        <end position="54"/>
    </location>
    <ligand>
        <name>ATP</name>
        <dbReference type="ChEBI" id="CHEBI:30616"/>
    </ligand>
</feature>
<feature type="binding site" evidence="1">
    <location>
        <position position="92"/>
    </location>
    <ligand>
        <name>ATP</name>
        <dbReference type="ChEBI" id="CHEBI:30616"/>
    </ligand>
</feature>
<feature type="binding site" evidence="1">
    <location>
        <position position="95"/>
    </location>
    <ligand>
        <name>ATP</name>
        <dbReference type="ChEBI" id="CHEBI:30616"/>
    </ligand>
</feature>
<feature type="binding site" evidence="1">
    <location>
        <position position="100"/>
    </location>
    <ligand>
        <name>ATP</name>
        <dbReference type="ChEBI" id="CHEBI:30616"/>
    </ligand>
</feature>
<feature type="binding site" evidence="1">
    <location>
        <position position="192"/>
    </location>
    <ligand>
        <name>Mg(2+)</name>
        <dbReference type="ChEBI" id="CHEBI:18420"/>
    </ligand>
</feature>
<feature type="binding site" evidence="1">
    <location>
        <position position="206"/>
    </location>
    <ligand>
        <name>Mg(2+)</name>
        <dbReference type="ChEBI" id="CHEBI:18420"/>
    </ligand>
</feature>
<feature type="binding site" evidence="1">
    <location>
        <position position="257"/>
    </location>
    <ligand>
        <name>substrate</name>
        <note>ligand shared with subunit alpha</note>
    </ligand>
</feature>
<feature type="binding site" evidence="1">
    <location>
        <begin position="319"/>
        <end position="321"/>
    </location>
    <ligand>
        <name>substrate</name>
        <note>ligand shared with subunit alpha</note>
    </ligand>
</feature>